<dbReference type="EC" id="3.1.-.-" evidence="1"/>
<dbReference type="EMBL" id="CP000813">
    <property type="protein sequence ID" value="ABV63044.1"/>
    <property type="molecule type" value="Genomic_DNA"/>
</dbReference>
<dbReference type="SMR" id="A8FFM7"/>
<dbReference type="STRING" id="315750.BPUM_2378"/>
<dbReference type="KEGG" id="bpu:BPUM_2378"/>
<dbReference type="eggNOG" id="COG0816">
    <property type="taxonomic scope" value="Bacteria"/>
</dbReference>
<dbReference type="HOGENOM" id="CLU_098240_2_0_9"/>
<dbReference type="OrthoDB" id="9796140at2"/>
<dbReference type="Proteomes" id="UP000001355">
    <property type="component" value="Chromosome"/>
</dbReference>
<dbReference type="GO" id="GO:0005829">
    <property type="term" value="C:cytosol"/>
    <property type="evidence" value="ECO:0007669"/>
    <property type="project" value="TreeGrafter"/>
</dbReference>
<dbReference type="GO" id="GO:0004518">
    <property type="term" value="F:nuclease activity"/>
    <property type="evidence" value="ECO:0007669"/>
    <property type="project" value="UniProtKB-KW"/>
</dbReference>
<dbReference type="GO" id="GO:0000967">
    <property type="term" value="P:rRNA 5'-end processing"/>
    <property type="evidence" value="ECO:0007669"/>
    <property type="project" value="UniProtKB-UniRule"/>
</dbReference>
<dbReference type="CDD" id="cd16964">
    <property type="entry name" value="YqgF"/>
    <property type="match status" value="1"/>
</dbReference>
<dbReference type="FunFam" id="3.30.420.140:FF:000003">
    <property type="entry name" value="Putative pre-16S rRNA nuclease"/>
    <property type="match status" value="1"/>
</dbReference>
<dbReference type="Gene3D" id="3.30.420.140">
    <property type="entry name" value="YqgF/RNase H-like domain"/>
    <property type="match status" value="1"/>
</dbReference>
<dbReference type="HAMAP" id="MF_00651">
    <property type="entry name" value="Nuclease_YqgF"/>
    <property type="match status" value="1"/>
</dbReference>
<dbReference type="InterPro" id="IPR012337">
    <property type="entry name" value="RNaseH-like_sf"/>
</dbReference>
<dbReference type="InterPro" id="IPR005227">
    <property type="entry name" value="YqgF"/>
</dbReference>
<dbReference type="InterPro" id="IPR006641">
    <property type="entry name" value="YqgF/RNaseH-like_dom"/>
</dbReference>
<dbReference type="InterPro" id="IPR037027">
    <property type="entry name" value="YqgF/RNaseH-like_dom_sf"/>
</dbReference>
<dbReference type="NCBIfam" id="TIGR00250">
    <property type="entry name" value="RNAse_H_YqgF"/>
    <property type="match status" value="1"/>
</dbReference>
<dbReference type="PANTHER" id="PTHR33317">
    <property type="entry name" value="POLYNUCLEOTIDYL TRANSFERASE, RIBONUCLEASE H-LIKE SUPERFAMILY PROTEIN"/>
    <property type="match status" value="1"/>
</dbReference>
<dbReference type="PANTHER" id="PTHR33317:SF4">
    <property type="entry name" value="POLYNUCLEOTIDYL TRANSFERASE, RIBONUCLEASE H-LIKE SUPERFAMILY PROTEIN"/>
    <property type="match status" value="1"/>
</dbReference>
<dbReference type="Pfam" id="PF03652">
    <property type="entry name" value="RuvX"/>
    <property type="match status" value="1"/>
</dbReference>
<dbReference type="SMART" id="SM00732">
    <property type="entry name" value="YqgFc"/>
    <property type="match status" value="1"/>
</dbReference>
<dbReference type="SUPFAM" id="SSF53098">
    <property type="entry name" value="Ribonuclease H-like"/>
    <property type="match status" value="1"/>
</dbReference>
<sequence length="138" mass="15025">MRILGLDLGTKTLGVAISDEMGWTAQGIETIKIDEAGGDFGLSRLSEIVSQYGTDKIVLGFPKNMNGTVGPRGEASQSFAKVLENTYNVPVVLWDERLSTMAAEKMLISADVSRQKRKKVIDKMAAVMILQGYLDSLN</sequence>
<organism>
    <name type="scientific">Bacillus pumilus (strain SAFR-032)</name>
    <dbReference type="NCBI Taxonomy" id="315750"/>
    <lineage>
        <taxon>Bacteria</taxon>
        <taxon>Bacillati</taxon>
        <taxon>Bacillota</taxon>
        <taxon>Bacilli</taxon>
        <taxon>Bacillales</taxon>
        <taxon>Bacillaceae</taxon>
        <taxon>Bacillus</taxon>
    </lineage>
</organism>
<gene>
    <name type="ordered locus">BPUM_2378</name>
</gene>
<name>YQGF_BACP2</name>
<accession>A8FFM7</accession>
<keyword id="KW-0963">Cytoplasm</keyword>
<keyword id="KW-0378">Hydrolase</keyword>
<keyword id="KW-0540">Nuclease</keyword>
<keyword id="KW-0690">Ribosome biogenesis</keyword>
<reference key="1">
    <citation type="journal article" date="2007" name="PLoS ONE">
        <title>Paradoxical DNA repair and peroxide resistance gene conservation in Bacillus pumilus SAFR-032.</title>
        <authorList>
            <person name="Gioia J."/>
            <person name="Yerrapragada S."/>
            <person name="Qin X."/>
            <person name="Jiang H."/>
            <person name="Igboeli O.C."/>
            <person name="Muzny D."/>
            <person name="Dugan-Rocha S."/>
            <person name="Ding Y."/>
            <person name="Hawes A."/>
            <person name="Liu W."/>
            <person name="Perez L."/>
            <person name="Kovar C."/>
            <person name="Dinh H."/>
            <person name="Lee S."/>
            <person name="Nazareth L."/>
            <person name="Blyth P."/>
            <person name="Holder M."/>
            <person name="Buhay C."/>
            <person name="Tirumalai M.R."/>
            <person name="Liu Y."/>
            <person name="Dasgupta I."/>
            <person name="Bokhetache L."/>
            <person name="Fujita M."/>
            <person name="Karouia F."/>
            <person name="Eswara Moorthy P."/>
            <person name="Siefert J."/>
            <person name="Uzman A."/>
            <person name="Buzumbo P."/>
            <person name="Verma A."/>
            <person name="Zwiya H."/>
            <person name="McWilliams B.D."/>
            <person name="Olowu A."/>
            <person name="Clinkenbeard K.D."/>
            <person name="Newcombe D."/>
            <person name="Golebiewski L."/>
            <person name="Petrosino J.F."/>
            <person name="Nicholson W.L."/>
            <person name="Fox G.E."/>
            <person name="Venkateswaran K."/>
            <person name="Highlander S.K."/>
            <person name="Weinstock G.M."/>
        </authorList>
    </citation>
    <scope>NUCLEOTIDE SEQUENCE [LARGE SCALE GENOMIC DNA]</scope>
    <source>
        <strain>SAFR-032</strain>
    </source>
</reference>
<proteinExistence type="inferred from homology"/>
<evidence type="ECO:0000255" key="1">
    <source>
        <dbReference type="HAMAP-Rule" id="MF_00651"/>
    </source>
</evidence>
<protein>
    <recommendedName>
        <fullName evidence="1">Putative pre-16S rRNA nuclease</fullName>
        <ecNumber evidence="1">3.1.-.-</ecNumber>
    </recommendedName>
</protein>
<feature type="chain" id="PRO_1000061484" description="Putative pre-16S rRNA nuclease">
    <location>
        <begin position="1"/>
        <end position="138"/>
    </location>
</feature>
<comment type="function">
    <text evidence="1">Could be a nuclease involved in processing of the 5'-end of pre-16S rRNA.</text>
</comment>
<comment type="subcellular location">
    <subcellularLocation>
        <location evidence="1">Cytoplasm</location>
    </subcellularLocation>
</comment>
<comment type="similarity">
    <text evidence="1">Belongs to the YqgF nuclease family.</text>
</comment>